<proteinExistence type="inferred from homology"/>
<reference key="1">
    <citation type="journal article" date="2008" name="J. Bacteriol.">
        <title>Complete genome sequence of Neisseria gonorrhoeae NCCP11945.</title>
        <authorList>
            <person name="Chung G.T."/>
            <person name="Yoo J.S."/>
            <person name="Oh H.B."/>
            <person name="Lee Y.S."/>
            <person name="Cha S.H."/>
            <person name="Kim S.J."/>
            <person name="Yoo C.K."/>
        </authorList>
    </citation>
    <scope>NUCLEOTIDE SEQUENCE [LARGE SCALE GENOMIC DNA]</scope>
    <source>
        <strain>NCCP11945</strain>
    </source>
</reference>
<evidence type="ECO:0000255" key="1">
    <source>
        <dbReference type="HAMAP-Rule" id="MF_00361"/>
    </source>
</evidence>
<organism>
    <name type="scientific">Neisseria gonorrhoeae (strain NCCP11945)</name>
    <dbReference type="NCBI Taxonomy" id="521006"/>
    <lineage>
        <taxon>Bacteria</taxon>
        <taxon>Pseudomonadati</taxon>
        <taxon>Pseudomonadota</taxon>
        <taxon>Betaproteobacteria</taxon>
        <taxon>Neisseriales</taxon>
        <taxon>Neisseriaceae</taxon>
        <taxon>Neisseria</taxon>
    </lineage>
</organism>
<protein>
    <recommendedName>
        <fullName evidence="1">NAD kinase</fullName>
        <ecNumber evidence="1">2.7.1.23</ecNumber>
    </recommendedName>
    <alternativeName>
        <fullName evidence="1">ATP-dependent NAD kinase</fullName>
    </alternativeName>
</protein>
<feature type="chain" id="PRO_1000120874" description="NAD kinase">
    <location>
        <begin position="1"/>
        <end position="296"/>
    </location>
</feature>
<feature type="active site" description="Proton acceptor" evidence="1">
    <location>
        <position position="78"/>
    </location>
</feature>
<feature type="binding site" evidence="1">
    <location>
        <begin position="78"/>
        <end position="79"/>
    </location>
    <ligand>
        <name>NAD(+)</name>
        <dbReference type="ChEBI" id="CHEBI:57540"/>
    </ligand>
</feature>
<feature type="binding site" evidence="1">
    <location>
        <begin position="152"/>
        <end position="153"/>
    </location>
    <ligand>
        <name>NAD(+)</name>
        <dbReference type="ChEBI" id="CHEBI:57540"/>
    </ligand>
</feature>
<feature type="binding site" evidence="1">
    <location>
        <position position="180"/>
    </location>
    <ligand>
        <name>NAD(+)</name>
        <dbReference type="ChEBI" id="CHEBI:57540"/>
    </ligand>
</feature>
<feature type="binding site" evidence="1">
    <location>
        <position position="182"/>
    </location>
    <ligand>
        <name>NAD(+)</name>
        <dbReference type="ChEBI" id="CHEBI:57540"/>
    </ligand>
</feature>
<feature type="binding site" evidence="1">
    <location>
        <position position="251"/>
    </location>
    <ligand>
        <name>NAD(+)</name>
        <dbReference type="ChEBI" id="CHEBI:57540"/>
    </ligand>
</feature>
<name>NADK_NEIG2</name>
<gene>
    <name evidence="1" type="primary">nadK</name>
    <name type="ordered locus">NGK_0550</name>
</gene>
<sequence>MNSPFHNIGIVTRPNTPDIQDTAHTLITFLKQHGFTVYLDEVGVRECCIYTQDTDGCHIVNKTELGQYCDLVAVLGGDGTFLSAAREITPRAVPIIGINQGHLGFLTQIPREYMTDKLLPVLEGKYLAEERILIEAALIREGKTAERALALNDAVLSRGGAGQMIEFEVFVNQEFVYTQRSDGLIVSTPTGSTAYSLAAGGPIMQAGLHAFTLVPICPQSMTNRPIAIPDTSEIEILVTQGGDARVHFDGQSFIDVQNLDRIIIRRYHNPLRILHPTDYQYFKTLRQKLHWGEQLV</sequence>
<dbReference type="EC" id="2.7.1.23" evidence="1"/>
<dbReference type="EMBL" id="CP001050">
    <property type="protein sequence ID" value="ACF29241.1"/>
    <property type="molecule type" value="Genomic_DNA"/>
</dbReference>
<dbReference type="RefSeq" id="WP_003687818.1">
    <property type="nucleotide sequence ID" value="NC_011035.1"/>
</dbReference>
<dbReference type="SMR" id="B4RK90"/>
<dbReference type="KEGG" id="ngk:NGK_0550"/>
<dbReference type="HOGENOM" id="CLU_008831_0_1_4"/>
<dbReference type="Proteomes" id="UP000002564">
    <property type="component" value="Chromosome"/>
</dbReference>
<dbReference type="GO" id="GO:0005737">
    <property type="term" value="C:cytoplasm"/>
    <property type="evidence" value="ECO:0007669"/>
    <property type="project" value="UniProtKB-SubCell"/>
</dbReference>
<dbReference type="GO" id="GO:0005524">
    <property type="term" value="F:ATP binding"/>
    <property type="evidence" value="ECO:0007669"/>
    <property type="project" value="UniProtKB-KW"/>
</dbReference>
<dbReference type="GO" id="GO:0046872">
    <property type="term" value="F:metal ion binding"/>
    <property type="evidence" value="ECO:0007669"/>
    <property type="project" value="UniProtKB-UniRule"/>
</dbReference>
<dbReference type="GO" id="GO:0051287">
    <property type="term" value="F:NAD binding"/>
    <property type="evidence" value="ECO:0007669"/>
    <property type="project" value="UniProtKB-ARBA"/>
</dbReference>
<dbReference type="GO" id="GO:0003951">
    <property type="term" value="F:NAD+ kinase activity"/>
    <property type="evidence" value="ECO:0007669"/>
    <property type="project" value="UniProtKB-UniRule"/>
</dbReference>
<dbReference type="GO" id="GO:0019674">
    <property type="term" value="P:NAD metabolic process"/>
    <property type="evidence" value="ECO:0007669"/>
    <property type="project" value="InterPro"/>
</dbReference>
<dbReference type="GO" id="GO:0006741">
    <property type="term" value="P:NADP biosynthetic process"/>
    <property type="evidence" value="ECO:0007669"/>
    <property type="project" value="UniProtKB-UniRule"/>
</dbReference>
<dbReference type="FunFam" id="2.60.200.30:FF:000011">
    <property type="entry name" value="NAD kinase"/>
    <property type="match status" value="1"/>
</dbReference>
<dbReference type="Gene3D" id="3.40.50.10330">
    <property type="entry name" value="Probable inorganic polyphosphate/atp-NAD kinase, domain 1"/>
    <property type="match status" value="1"/>
</dbReference>
<dbReference type="Gene3D" id="2.60.200.30">
    <property type="entry name" value="Probable inorganic polyphosphate/atp-NAD kinase, domain 2"/>
    <property type="match status" value="1"/>
</dbReference>
<dbReference type="HAMAP" id="MF_00361">
    <property type="entry name" value="NAD_kinase"/>
    <property type="match status" value="1"/>
</dbReference>
<dbReference type="InterPro" id="IPR017438">
    <property type="entry name" value="ATP-NAD_kinase_N"/>
</dbReference>
<dbReference type="InterPro" id="IPR017437">
    <property type="entry name" value="ATP-NAD_kinase_PpnK-typ_C"/>
</dbReference>
<dbReference type="InterPro" id="IPR016064">
    <property type="entry name" value="NAD/diacylglycerol_kinase_sf"/>
</dbReference>
<dbReference type="InterPro" id="IPR002504">
    <property type="entry name" value="NADK"/>
</dbReference>
<dbReference type="NCBIfam" id="NF002306">
    <property type="entry name" value="PRK01231.1"/>
    <property type="match status" value="1"/>
</dbReference>
<dbReference type="NCBIfam" id="NF003391">
    <property type="entry name" value="PRK04539.1"/>
    <property type="match status" value="1"/>
</dbReference>
<dbReference type="PANTHER" id="PTHR20275">
    <property type="entry name" value="NAD KINASE"/>
    <property type="match status" value="1"/>
</dbReference>
<dbReference type="PANTHER" id="PTHR20275:SF0">
    <property type="entry name" value="NAD KINASE"/>
    <property type="match status" value="1"/>
</dbReference>
<dbReference type="Pfam" id="PF01513">
    <property type="entry name" value="NAD_kinase"/>
    <property type="match status" value="1"/>
</dbReference>
<dbReference type="Pfam" id="PF20143">
    <property type="entry name" value="NAD_kinase_C"/>
    <property type="match status" value="1"/>
</dbReference>
<dbReference type="SUPFAM" id="SSF111331">
    <property type="entry name" value="NAD kinase/diacylglycerol kinase-like"/>
    <property type="match status" value="1"/>
</dbReference>
<keyword id="KW-0067">ATP-binding</keyword>
<keyword id="KW-0963">Cytoplasm</keyword>
<keyword id="KW-0418">Kinase</keyword>
<keyword id="KW-0520">NAD</keyword>
<keyword id="KW-0521">NADP</keyword>
<keyword id="KW-0547">Nucleotide-binding</keyword>
<keyword id="KW-0808">Transferase</keyword>
<accession>B4RK90</accession>
<comment type="function">
    <text evidence="1">Involved in the regulation of the intracellular balance of NAD and NADP, and is a key enzyme in the biosynthesis of NADP. Catalyzes specifically the phosphorylation on 2'-hydroxyl of the adenosine moiety of NAD to yield NADP.</text>
</comment>
<comment type="catalytic activity">
    <reaction evidence="1">
        <text>NAD(+) + ATP = ADP + NADP(+) + H(+)</text>
        <dbReference type="Rhea" id="RHEA:18629"/>
        <dbReference type="ChEBI" id="CHEBI:15378"/>
        <dbReference type="ChEBI" id="CHEBI:30616"/>
        <dbReference type="ChEBI" id="CHEBI:57540"/>
        <dbReference type="ChEBI" id="CHEBI:58349"/>
        <dbReference type="ChEBI" id="CHEBI:456216"/>
        <dbReference type="EC" id="2.7.1.23"/>
    </reaction>
</comment>
<comment type="cofactor">
    <cofactor evidence="1">
        <name>a divalent metal cation</name>
        <dbReference type="ChEBI" id="CHEBI:60240"/>
    </cofactor>
</comment>
<comment type="subcellular location">
    <subcellularLocation>
        <location evidence="1">Cytoplasm</location>
    </subcellularLocation>
</comment>
<comment type="similarity">
    <text evidence="1">Belongs to the NAD kinase family.</text>
</comment>